<reference key="1">
    <citation type="submission" date="2007-04" db="EMBL/GenBank/DDBJ databases">
        <title>Complete sequence of Pseudomonas mendocina ymp.</title>
        <authorList>
            <consortium name="US DOE Joint Genome Institute"/>
            <person name="Copeland A."/>
            <person name="Lucas S."/>
            <person name="Lapidus A."/>
            <person name="Barry K."/>
            <person name="Glavina del Rio T."/>
            <person name="Dalin E."/>
            <person name="Tice H."/>
            <person name="Pitluck S."/>
            <person name="Kiss H."/>
            <person name="Brettin T."/>
            <person name="Detter J.C."/>
            <person name="Bruce D."/>
            <person name="Han C."/>
            <person name="Schmutz J."/>
            <person name="Larimer F."/>
            <person name="Land M."/>
            <person name="Hauser L."/>
            <person name="Kyrpides N."/>
            <person name="Mikhailova N."/>
            <person name="Hersman L."/>
            <person name="Dubois J."/>
            <person name="Maurice P."/>
            <person name="Richardson P."/>
        </authorList>
    </citation>
    <scope>NUCLEOTIDE SEQUENCE [LARGE SCALE GENOMIC DNA]</scope>
    <source>
        <strain>ymp</strain>
    </source>
</reference>
<dbReference type="EC" id="7.2.1.1" evidence="1"/>
<dbReference type="EMBL" id="CP000680">
    <property type="protein sequence ID" value="ABP84360.1"/>
    <property type="molecule type" value="Genomic_DNA"/>
</dbReference>
<dbReference type="SMR" id="A4XSP4"/>
<dbReference type="STRING" id="399739.Pmen_1596"/>
<dbReference type="KEGG" id="pmy:Pmen_1596"/>
<dbReference type="PATRIC" id="fig|399739.8.peg.1618"/>
<dbReference type="eggNOG" id="COG1805">
    <property type="taxonomic scope" value="Bacteria"/>
</dbReference>
<dbReference type="HOGENOM" id="CLU_042020_1_1_6"/>
<dbReference type="OrthoDB" id="9776359at2"/>
<dbReference type="GO" id="GO:0005886">
    <property type="term" value="C:plasma membrane"/>
    <property type="evidence" value="ECO:0007669"/>
    <property type="project" value="UniProtKB-SubCell"/>
</dbReference>
<dbReference type="GO" id="GO:0010181">
    <property type="term" value="F:FMN binding"/>
    <property type="evidence" value="ECO:0007669"/>
    <property type="project" value="InterPro"/>
</dbReference>
<dbReference type="GO" id="GO:0016655">
    <property type="term" value="F:oxidoreductase activity, acting on NAD(P)H, quinone or similar compound as acceptor"/>
    <property type="evidence" value="ECO:0007669"/>
    <property type="project" value="UniProtKB-UniRule"/>
</dbReference>
<dbReference type="GO" id="GO:0022904">
    <property type="term" value="P:respiratory electron transport chain"/>
    <property type="evidence" value="ECO:0007669"/>
    <property type="project" value="InterPro"/>
</dbReference>
<dbReference type="GO" id="GO:0006814">
    <property type="term" value="P:sodium ion transport"/>
    <property type="evidence" value="ECO:0007669"/>
    <property type="project" value="UniProtKB-UniRule"/>
</dbReference>
<dbReference type="GO" id="GO:0055085">
    <property type="term" value="P:transmembrane transport"/>
    <property type="evidence" value="ECO:0007669"/>
    <property type="project" value="InterPro"/>
</dbReference>
<dbReference type="HAMAP" id="MF_00426">
    <property type="entry name" value="NqrB"/>
    <property type="match status" value="1"/>
</dbReference>
<dbReference type="InterPro" id="IPR010966">
    <property type="entry name" value="NqrB"/>
</dbReference>
<dbReference type="InterPro" id="IPR004338">
    <property type="entry name" value="NqrB/RnfD"/>
</dbReference>
<dbReference type="NCBIfam" id="TIGR01937">
    <property type="entry name" value="nqrB"/>
    <property type="match status" value="1"/>
</dbReference>
<dbReference type="NCBIfam" id="NF003756">
    <property type="entry name" value="PRK05349.1"/>
    <property type="match status" value="1"/>
</dbReference>
<dbReference type="PANTHER" id="PTHR30578">
    <property type="entry name" value="ELECTRON TRANSPORT COMPLEX PROTEIN RNFD"/>
    <property type="match status" value="1"/>
</dbReference>
<dbReference type="PANTHER" id="PTHR30578:SF1">
    <property type="entry name" value="NA(+)-TRANSLOCATING NADH-QUINONE REDUCTASE SUBUNIT B"/>
    <property type="match status" value="1"/>
</dbReference>
<dbReference type="Pfam" id="PF03116">
    <property type="entry name" value="NQR2_RnfD_RnfE"/>
    <property type="match status" value="1"/>
</dbReference>
<dbReference type="PIRSF" id="PIRSF016055">
    <property type="entry name" value="NADH-UbQ_OxRdtase_B_su"/>
    <property type="match status" value="1"/>
</dbReference>
<proteinExistence type="inferred from homology"/>
<protein>
    <recommendedName>
        <fullName evidence="1">Na(+)-translocating NADH-quinone reductase subunit B</fullName>
        <shortName evidence="1">Na(+)-NQR subunit B</shortName>
        <shortName evidence="1">Na(+)-translocating NQR subunit B</shortName>
        <ecNumber evidence="1">7.2.1.1</ecNumber>
    </recommendedName>
    <alternativeName>
        <fullName evidence="1">NQR complex subunit B</fullName>
    </alternativeName>
    <alternativeName>
        <fullName evidence="1">NQR-1 subunit B</fullName>
    </alternativeName>
</protein>
<sequence>MGIRAFLDKIEHNFEKGGKYEKWYALYEAIDTFFYRPGSVTKTTAHVRDGIDLKRMMITVWLCTFPAMFFGMWNTGYQANLIFAQSPELLASQEGWRFALIGSLAGFDPNSLWDNFIQGAAYFLPVYAVTFIVGGFWEVLFASIRKHEVNEGFFVTSVLFALILPPSIPLWQVALGISFGVVIGKEVFGGTGKNFLNPALTGRAFLFFAYPAQMSGDAVWTAVDGFAGATSLSLAASGGIENVINNGITWMDAFIGTIHGSLGETSTLAIAIGGLVLLITKIASWRIVSGVMLGMIGLSLLLNLIGSNTNPMFAMPWYWHLVVGGFAFGMFFMATDPVSASMTNTGKWIFGALIGVMVVLIRVVNPAFPEGMMLAILFANLFAPLIDHFVVQANIKRRLARNV</sequence>
<evidence type="ECO:0000255" key="1">
    <source>
        <dbReference type="HAMAP-Rule" id="MF_00426"/>
    </source>
</evidence>
<organism>
    <name type="scientific">Ectopseudomonas mendocina (strain ymp)</name>
    <name type="common">Pseudomonas mendocina</name>
    <dbReference type="NCBI Taxonomy" id="399739"/>
    <lineage>
        <taxon>Bacteria</taxon>
        <taxon>Pseudomonadati</taxon>
        <taxon>Pseudomonadota</taxon>
        <taxon>Gammaproteobacteria</taxon>
        <taxon>Pseudomonadales</taxon>
        <taxon>Pseudomonadaceae</taxon>
        <taxon>Ectopseudomonas</taxon>
    </lineage>
</organism>
<feature type="chain" id="PRO_1000060145" description="Na(+)-translocating NADH-quinone reductase subunit B">
    <location>
        <begin position="1"/>
        <end position="403"/>
    </location>
</feature>
<feature type="transmembrane region" description="Helical" evidence="1">
    <location>
        <begin position="56"/>
        <end position="76"/>
    </location>
</feature>
<feature type="transmembrane region" description="Helical" evidence="1">
    <location>
        <begin position="121"/>
        <end position="141"/>
    </location>
</feature>
<feature type="transmembrane region" description="Helical" evidence="1">
    <location>
        <begin position="163"/>
        <end position="183"/>
    </location>
</feature>
<feature type="transmembrane region" description="Helical" evidence="1">
    <location>
        <begin position="220"/>
        <end position="240"/>
    </location>
</feature>
<feature type="transmembrane region" description="Helical" evidence="1">
    <location>
        <begin position="265"/>
        <end position="285"/>
    </location>
</feature>
<feature type="transmembrane region" description="Helical" evidence="1">
    <location>
        <begin position="287"/>
        <end position="307"/>
    </location>
</feature>
<feature type="transmembrane region" description="Helical" evidence="1">
    <location>
        <begin position="312"/>
        <end position="332"/>
    </location>
</feature>
<feature type="transmembrane region" description="Helical" evidence="1">
    <location>
        <begin position="348"/>
        <end position="368"/>
    </location>
</feature>
<feature type="transmembrane region" description="Helical" evidence="1">
    <location>
        <begin position="371"/>
        <end position="391"/>
    </location>
</feature>
<feature type="modified residue" description="FMN phosphoryl threonine" evidence="1">
    <location>
        <position position="230"/>
    </location>
</feature>
<gene>
    <name evidence="1" type="primary">nqrB</name>
    <name type="ordered locus">Pmen_1596</name>
</gene>
<accession>A4XSP4</accession>
<comment type="function">
    <text evidence="1">NQR complex catalyzes the reduction of ubiquinone-1 to ubiquinol by two successive reactions, coupled with the transport of Na(+) ions from the cytoplasm to the periplasm. NqrA to NqrE are probably involved in the second step, the conversion of ubisemiquinone to ubiquinol.</text>
</comment>
<comment type="catalytic activity">
    <reaction evidence="1">
        <text>a ubiquinone + n Na(+)(in) + NADH + H(+) = a ubiquinol + n Na(+)(out) + NAD(+)</text>
        <dbReference type="Rhea" id="RHEA:47748"/>
        <dbReference type="Rhea" id="RHEA-COMP:9565"/>
        <dbReference type="Rhea" id="RHEA-COMP:9566"/>
        <dbReference type="ChEBI" id="CHEBI:15378"/>
        <dbReference type="ChEBI" id="CHEBI:16389"/>
        <dbReference type="ChEBI" id="CHEBI:17976"/>
        <dbReference type="ChEBI" id="CHEBI:29101"/>
        <dbReference type="ChEBI" id="CHEBI:57540"/>
        <dbReference type="ChEBI" id="CHEBI:57945"/>
        <dbReference type="EC" id="7.2.1.1"/>
    </reaction>
</comment>
<comment type="cofactor">
    <cofactor evidence="1">
        <name>FMN</name>
        <dbReference type="ChEBI" id="CHEBI:58210"/>
    </cofactor>
</comment>
<comment type="subunit">
    <text evidence="1">Composed of six subunits; NqrA, NqrB, NqrC, NqrD, NqrE and NqrF.</text>
</comment>
<comment type="subcellular location">
    <subcellularLocation>
        <location evidence="1">Cell inner membrane</location>
        <topology evidence="1">Multi-pass membrane protein</topology>
    </subcellularLocation>
</comment>
<comment type="similarity">
    <text evidence="1">Belongs to the NqrB/RnfD family.</text>
</comment>
<keyword id="KW-0997">Cell inner membrane</keyword>
<keyword id="KW-1003">Cell membrane</keyword>
<keyword id="KW-0285">Flavoprotein</keyword>
<keyword id="KW-0288">FMN</keyword>
<keyword id="KW-0406">Ion transport</keyword>
<keyword id="KW-0472">Membrane</keyword>
<keyword id="KW-0520">NAD</keyword>
<keyword id="KW-0597">Phosphoprotein</keyword>
<keyword id="KW-0915">Sodium</keyword>
<keyword id="KW-0739">Sodium transport</keyword>
<keyword id="KW-1278">Translocase</keyword>
<keyword id="KW-0812">Transmembrane</keyword>
<keyword id="KW-1133">Transmembrane helix</keyword>
<keyword id="KW-0813">Transport</keyword>
<keyword id="KW-0830">Ubiquinone</keyword>
<name>NQRB_ECTM1</name>